<keyword id="KW-0067">ATP-binding</keyword>
<keyword id="KW-0460">Magnesium</keyword>
<keyword id="KW-0547">Nucleotide-binding</keyword>
<keyword id="KW-0808">Transferase</keyword>
<keyword id="KW-0819">tRNA processing</keyword>
<reference key="1">
    <citation type="journal article" date="2005" name="Nucleic Acids Res.">
        <title>The genome sequence of Salmonella enterica serovar Choleraesuis, a highly invasive and resistant zoonotic pathogen.</title>
        <authorList>
            <person name="Chiu C.-H."/>
            <person name="Tang P."/>
            <person name="Chu C."/>
            <person name="Hu S."/>
            <person name="Bao Q."/>
            <person name="Yu J."/>
            <person name="Chou Y.-Y."/>
            <person name="Wang H.-S."/>
            <person name="Lee Y.-S."/>
        </authorList>
    </citation>
    <scope>NUCLEOTIDE SEQUENCE [LARGE SCALE GENOMIC DNA]</scope>
    <source>
        <strain>SC-B67</strain>
    </source>
</reference>
<organism>
    <name type="scientific">Salmonella choleraesuis (strain SC-B67)</name>
    <dbReference type="NCBI Taxonomy" id="321314"/>
    <lineage>
        <taxon>Bacteria</taxon>
        <taxon>Pseudomonadati</taxon>
        <taxon>Pseudomonadota</taxon>
        <taxon>Gammaproteobacteria</taxon>
        <taxon>Enterobacterales</taxon>
        <taxon>Enterobacteriaceae</taxon>
        <taxon>Salmonella</taxon>
    </lineage>
</organism>
<sequence length="316" mass="35112">MNDVSKASLPKAIFLMGPTASGKTALAIALRKVLPVELISVDSALIYRGMDIGTAKPNADELKAAPHRLLDIRDPSQAYSAADFRRDALAQMAEITAAGRIPLLVGGTMLYFKALLEGLSPLPSADPEVRSRIEQQAAELGWEALHQQLQEIDPVAAARIHPNDPQRLSRALEVFFISGKTLTELTQTSGDALPYQVHQFAIAPASRELLHQRIELRFHQMLASGFEAEVRALFARGDLHTDLPSIRCVGYRQMWSYIEGEISYDEMVYRGVCATRQLAKRQMTWLRGWEGVRWLDSENPDRARKEVLQVVGAIAD</sequence>
<name>MIAA_SALCH</name>
<accession>Q57GM0</accession>
<feature type="chain" id="PRO_1000020654" description="tRNA dimethylallyltransferase">
    <location>
        <begin position="1"/>
        <end position="316"/>
    </location>
</feature>
<feature type="region of interest" description="Interaction with substrate tRNA" evidence="1">
    <location>
        <begin position="42"/>
        <end position="45"/>
    </location>
</feature>
<feature type="region of interest" description="Interaction with substrate tRNA" evidence="1">
    <location>
        <begin position="166"/>
        <end position="170"/>
    </location>
</feature>
<feature type="region of interest" description="Interaction with substrate tRNA" evidence="1">
    <location>
        <begin position="247"/>
        <end position="252"/>
    </location>
</feature>
<feature type="binding site" evidence="1">
    <location>
        <begin position="17"/>
        <end position="24"/>
    </location>
    <ligand>
        <name>ATP</name>
        <dbReference type="ChEBI" id="CHEBI:30616"/>
    </ligand>
</feature>
<feature type="binding site" evidence="1">
    <location>
        <begin position="19"/>
        <end position="24"/>
    </location>
    <ligand>
        <name>substrate</name>
    </ligand>
</feature>
<feature type="site" description="Interaction with substrate tRNA" evidence="1">
    <location>
        <position position="108"/>
    </location>
</feature>
<feature type="site" description="Interaction with substrate tRNA" evidence="1">
    <location>
        <position position="130"/>
    </location>
</feature>
<protein>
    <recommendedName>
        <fullName evidence="1">tRNA dimethylallyltransferase</fullName>
        <ecNumber evidence="1">2.5.1.75</ecNumber>
    </recommendedName>
    <alternativeName>
        <fullName evidence="1">Dimethylallyl diphosphate:tRNA dimethylallyltransferase</fullName>
        <shortName evidence="1">DMAPP:tRNA dimethylallyltransferase</shortName>
        <shortName evidence="1">DMATase</shortName>
    </alternativeName>
    <alternativeName>
        <fullName evidence="1">Isopentenyl-diphosphate:tRNA isopentenyltransferase</fullName>
        <shortName evidence="1">IPP transferase</shortName>
        <shortName evidence="1">IPPT</shortName>
        <shortName evidence="1">IPTase</shortName>
    </alternativeName>
</protein>
<dbReference type="EC" id="2.5.1.75" evidence="1"/>
<dbReference type="EMBL" id="AE017220">
    <property type="protein sequence ID" value="AAX68142.1"/>
    <property type="molecule type" value="Genomic_DNA"/>
</dbReference>
<dbReference type="RefSeq" id="WP_001000729.1">
    <property type="nucleotide sequence ID" value="NC_006905.1"/>
</dbReference>
<dbReference type="SMR" id="Q57GM0"/>
<dbReference type="KEGG" id="sec:SCH_4236"/>
<dbReference type="HOGENOM" id="CLU_032616_0_0_6"/>
<dbReference type="Proteomes" id="UP000000538">
    <property type="component" value="Chromosome"/>
</dbReference>
<dbReference type="GO" id="GO:0005524">
    <property type="term" value="F:ATP binding"/>
    <property type="evidence" value="ECO:0007669"/>
    <property type="project" value="UniProtKB-UniRule"/>
</dbReference>
<dbReference type="GO" id="GO:0052381">
    <property type="term" value="F:tRNA dimethylallyltransferase activity"/>
    <property type="evidence" value="ECO:0007669"/>
    <property type="project" value="UniProtKB-UniRule"/>
</dbReference>
<dbReference type="GO" id="GO:0006400">
    <property type="term" value="P:tRNA modification"/>
    <property type="evidence" value="ECO:0007669"/>
    <property type="project" value="TreeGrafter"/>
</dbReference>
<dbReference type="FunFam" id="1.10.20.140:FF:000001">
    <property type="entry name" value="tRNA dimethylallyltransferase"/>
    <property type="match status" value="1"/>
</dbReference>
<dbReference type="FunFam" id="1.10.287.890:FF:000001">
    <property type="entry name" value="tRNA dimethylallyltransferase"/>
    <property type="match status" value="1"/>
</dbReference>
<dbReference type="Gene3D" id="1.10.20.140">
    <property type="match status" value="1"/>
</dbReference>
<dbReference type="Gene3D" id="1.10.287.890">
    <property type="entry name" value="Crystal structure of tRNA isopentenylpyrophosphate transferase (bh2366) domain"/>
    <property type="match status" value="1"/>
</dbReference>
<dbReference type="Gene3D" id="3.40.50.300">
    <property type="entry name" value="P-loop containing nucleotide triphosphate hydrolases"/>
    <property type="match status" value="1"/>
</dbReference>
<dbReference type="HAMAP" id="MF_00185">
    <property type="entry name" value="IPP_trans"/>
    <property type="match status" value="1"/>
</dbReference>
<dbReference type="InterPro" id="IPR039657">
    <property type="entry name" value="Dimethylallyltransferase"/>
</dbReference>
<dbReference type="InterPro" id="IPR018022">
    <property type="entry name" value="IPT"/>
</dbReference>
<dbReference type="InterPro" id="IPR027417">
    <property type="entry name" value="P-loop_NTPase"/>
</dbReference>
<dbReference type="NCBIfam" id="TIGR00174">
    <property type="entry name" value="miaA"/>
    <property type="match status" value="1"/>
</dbReference>
<dbReference type="PANTHER" id="PTHR11088">
    <property type="entry name" value="TRNA DIMETHYLALLYLTRANSFERASE"/>
    <property type="match status" value="1"/>
</dbReference>
<dbReference type="PANTHER" id="PTHR11088:SF60">
    <property type="entry name" value="TRNA DIMETHYLALLYLTRANSFERASE"/>
    <property type="match status" value="1"/>
</dbReference>
<dbReference type="Pfam" id="PF01715">
    <property type="entry name" value="IPPT"/>
    <property type="match status" value="1"/>
</dbReference>
<dbReference type="SUPFAM" id="SSF52540">
    <property type="entry name" value="P-loop containing nucleoside triphosphate hydrolases"/>
    <property type="match status" value="1"/>
</dbReference>
<gene>
    <name evidence="1" type="primary">miaA</name>
    <name type="ordered locus">SCH_4236</name>
</gene>
<proteinExistence type="inferred from homology"/>
<evidence type="ECO:0000255" key="1">
    <source>
        <dbReference type="HAMAP-Rule" id="MF_00185"/>
    </source>
</evidence>
<comment type="function">
    <text evidence="1">Catalyzes the transfer of a dimethylallyl group onto the adenine at position 37 in tRNAs that read codons beginning with uridine, leading to the formation of N6-(dimethylallyl)adenosine (i(6)A).</text>
</comment>
<comment type="catalytic activity">
    <reaction evidence="1">
        <text>adenosine(37) in tRNA + dimethylallyl diphosphate = N(6)-dimethylallyladenosine(37) in tRNA + diphosphate</text>
        <dbReference type="Rhea" id="RHEA:26482"/>
        <dbReference type="Rhea" id="RHEA-COMP:10162"/>
        <dbReference type="Rhea" id="RHEA-COMP:10375"/>
        <dbReference type="ChEBI" id="CHEBI:33019"/>
        <dbReference type="ChEBI" id="CHEBI:57623"/>
        <dbReference type="ChEBI" id="CHEBI:74411"/>
        <dbReference type="ChEBI" id="CHEBI:74415"/>
        <dbReference type="EC" id="2.5.1.75"/>
    </reaction>
</comment>
<comment type="cofactor">
    <cofactor evidence="1">
        <name>Mg(2+)</name>
        <dbReference type="ChEBI" id="CHEBI:18420"/>
    </cofactor>
</comment>
<comment type="subunit">
    <text evidence="1">Monomer.</text>
</comment>
<comment type="similarity">
    <text evidence="1">Belongs to the IPP transferase family.</text>
</comment>